<feature type="chain" id="PRO_0000060755" description="Cytochrome b">
    <location>
        <begin position="1"/>
        <end position="379"/>
    </location>
</feature>
<feature type="transmembrane region" description="Helical" evidence="2">
    <location>
        <begin position="33"/>
        <end position="53"/>
    </location>
</feature>
<feature type="transmembrane region" description="Helical" evidence="2">
    <location>
        <begin position="77"/>
        <end position="98"/>
    </location>
</feature>
<feature type="transmembrane region" description="Helical" evidence="2">
    <location>
        <begin position="113"/>
        <end position="133"/>
    </location>
</feature>
<feature type="transmembrane region" description="Helical" evidence="2">
    <location>
        <begin position="178"/>
        <end position="198"/>
    </location>
</feature>
<feature type="transmembrane region" description="Helical" evidence="2">
    <location>
        <begin position="226"/>
        <end position="246"/>
    </location>
</feature>
<feature type="transmembrane region" description="Helical" evidence="2">
    <location>
        <begin position="288"/>
        <end position="308"/>
    </location>
</feature>
<feature type="transmembrane region" description="Helical" evidence="2">
    <location>
        <begin position="320"/>
        <end position="340"/>
    </location>
</feature>
<feature type="transmembrane region" description="Helical" evidence="2">
    <location>
        <begin position="347"/>
        <end position="367"/>
    </location>
</feature>
<feature type="binding site" description="axial binding residue" evidence="2">
    <location>
        <position position="83"/>
    </location>
    <ligand>
        <name>heme b</name>
        <dbReference type="ChEBI" id="CHEBI:60344"/>
        <label>b562</label>
    </ligand>
    <ligandPart>
        <name>Fe</name>
        <dbReference type="ChEBI" id="CHEBI:18248"/>
    </ligandPart>
</feature>
<feature type="binding site" description="axial binding residue" evidence="2">
    <location>
        <position position="97"/>
    </location>
    <ligand>
        <name>heme b</name>
        <dbReference type="ChEBI" id="CHEBI:60344"/>
        <label>b566</label>
    </ligand>
    <ligandPart>
        <name>Fe</name>
        <dbReference type="ChEBI" id="CHEBI:18248"/>
    </ligandPart>
</feature>
<feature type="binding site" description="axial binding residue" evidence="2">
    <location>
        <position position="182"/>
    </location>
    <ligand>
        <name>heme b</name>
        <dbReference type="ChEBI" id="CHEBI:60344"/>
        <label>b562</label>
    </ligand>
    <ligandPart>
        <name>Fe</name>
        <dbReference type="ChEBI" id="CHEBI:18248"/>
    </ligandPart>
</feature>
<feature type="binding site" description="axial binding residue" evidence="2">
    <location>
        <position position="196"/>
    </location>
    <ligand>
        <name>heme b</name>
        <dbReference type="ChEBI" id="CHEBI:60344"/>
        <label>b566</label>
    </ligand>
    <ligandPart>
        <name>Fe</name>
        <dbReference type="ChEBI" id="CHEBI:18248"/>
    </ligandPart>
</feature>
<feature type="binding site" evidence="2">
    <location>
        <position position="201"/>
    </location>
    <ligand>
        <name>a ubiquinone</name>
        <dbReference type="ChEBI" id="CHEBI:16389"/>
    </ligand>
</feature>
<proteinExistence type="inferred from homology"/>
<geneLocation type="mitochondrion"/>
<name>CYB_CEPNI</name>
<reference key="1">
    <citation type="journal article" date="2001" name="Mol. Phylogenet. Evol.">
        <title>Retrieval of four adaptive lineages in duiker antelope: evidence from mitochondrial DNA sequences and fluorescence in situ hybridization.</title>
        <authorList>
            <person name="van Vuuren B.J."/>
            <person name="Robinson T.J."/>
        </authorList>
    </citation>
    <scope>NUCLEOTIDE SEQUENCE [GENOMIC DNA]</scope>
</reference>
<keyword id="KW-0249">Electron transport</keyword>
<keyword id="KW-0349">Heme</keyword>
<keyword id="KW-0408">Iron</keyword>
<keyword id="KW-0472">Membrane</keyword>
<keyword id="KW-0479">Metal-binding</keyword>
<keyword id="KW-0496">Mitochondrion</keyword>
<keyword id="KW-0999">Mitochondrion inner membrane</keyword>
<keyword id="KW-0679">Respiratory chain</keyword>
<keyword id="KW-0812">Transmembrane</keyword>
<keyword id="KW-1133">Transmembrane helix</keyword>
<keyword id="KW-0813">Transport</keyword>
<keyword id="KW-0830">Ubiquinone</keyword>
<dbReference type="EMBL" id="AF153895">
    <property type="protein sequence ID" value="AAK26683.1"/>
    <property type="molecule type" value="Genomic_DNA"/>
</dbReference>
<dbReference type="SMR" id="Q9B5R1"/>
<dbReference type="GO" id="GO:0005743">
    <property type="term" value="C:mitochondrial inner membrane"/>
    <property type="evidence" value="ECO:0007669"/>
    <property type="project" value="UniProtKB-SubCell"/>
</dbReference>
<dbReference type="GO" id="GO:0045275">
    <property type="term" value="C:respiratory chain complex III"/>
    <property type="evidence" value="ECO:0007669"/>
    <property type="project" value="InterPro"/>
</dbReference>
<dbReference type="GO" id="GO:0046872">
    <property type="term" value="F:metal ion binding"/>
    <property type="evidence" value="ECO:0007669"/>
    <property type="project" value="UniProtKB-KW"/>
</dbReference>
<dbReference type="GO" id="GO:0008121">
    <property type="term" value="F:ubiquinol-cytochrome-c reductase activity"/>
    <property type="evidence" value="ECO:0007669"/>
    <property type="project" value="InterPro"/>
</dbReference>
<dbReference type="GO" id="GO:0006122">
    <property type="term" value="P:mitochondrial electron transport, ubiquinol to cytochrome c"/>
    <property type="evidence" value="ECO:0007669"/>
    <property type="project" value="TreeGrafter"/>
</dbReference>
<dbReference type="CDD" id="cd00290">
    <property type="entry name" value="cytochrome_b_C"/>
    <property type="match status" value="1"/>
</dbReference>
<dbReference type="CDD" id="cd00284">
    <property type="entry name" value="Cytochrome_b_N"/>
    <property type="match status" value="1"/>
</dbReference>
<dbReference type="FunFam" id="1.20.810.10:FF:000002">
    <property type="entry name" value="Cytochrome b"/>
    <property type="match status" value="1"/>
</dbReference>
<dbReference type="Gene3D" id="1.20.810.10">
    <property type="entry name" value="Cytochrome Bc1 Complex, Chain C"/>
    <property type="match status" value="1"/>
</dbReference>
<dbReference type="InterPro" id="IPR005798">
    <property type="entry name" value="Cyt_b/b6_C"/>
</dbReference>
<dbReference type="InterPro" id="IPR036150">
    <property type="entry name" value="Cyt_b/b6_C_sf"/>
</dbReference>
<dbReference type="InterPro" id="IPR005797">
    <property type="entry name" value="Cyt_b/b6_N"/>
</dbReference>
<dbReference type="InterPro" id="IPR027387">
    <property type="entry name" value="Cytb/b6-like_sf"/>
</dbReference>
<dbReference type="InterPro" id="IPR030689">
    <property type="entry name" value="Cytochrome_b"/>
</dbReference>
<dbReference type="InterPro" id="IPR048260">
    <property type="entry name" value="Cytochrome_b_C_euk/bac"/>
</dbReference>
<dbReference type="InterPro" id="IPR048259">
    <property type="entry name" value="Cytochrome_b_N_euk/bac"/>
</dbReference>
<dbReference type="InterPro" id="IPR016174">
    <property type="entry name" value="Di-haem_cyt_TM"/>
</dbReference>
<dbReference type="PANTHER" id="PTHR19271">
    <property type="entry name" value="CYTOCHROME B"/>
    <property type="match status" value="1"/>
</dbReference>
<dbReference type="PANTHER" id="PTHR19271:SF16">
    <property type="entry name" value="CYTOCHROME B"/>
    <property type="match status" value="1"/>
</dbReference>
<dbReference type="Pfam" id="PF00032">
    <property type="entry name" value="Cytochrom_B_C"/>
    <property type="match status" value="1"/>
</dbReference>
<dbReference type="Pfam" id="PF00033">
    <property type="entry name" value="Cytochrome_B"/>
    <property type="match status" value="1"/>
</dbReference>
<dbReference type="PIRSF" id="PIRSF038885">
    <property type="entry name" value="COB"/>
    <property type="match status" value="1"/>
</dbReference>
<dbReference type="SUPFAM" id="SSF81648">
    <property type="entry name" value="a domain/subunit of cytochrome bc1 complex (Ubiquinol-cytochrome c reductase)"/>
    <property type="match status" value="1"/>
</dbReference>
<dbReference type="SUPFAM" id="SSF81342">
    <property type="entry name" value="Transmembrane di-heme cytochromes"/>
    <property type="match status" value="1"/>
</dbReference>
<dbReference type="PROSITE" id="PS51003">
    <property type="entry name" value="CYTB_CTER"/>
    <property type="match status" value="1"/>
</dbReference>
<dbReference type="PROSITE" id="PS51002">
    <property type="entry name" value="CYTB_NTER"/>
    <property type="match status" value="1"/>
</dbReference>
<comment type="function">
    <text evidence="2">Component of the ubiquinol-cytochrome c reductase complex (complex III or cytochrome b-c1 complex) that is part of the mitochondrial respiratory chain. The b-c1 complex mediates electron transfer from ubiquinol to cytochrome c. Contributes to the generation of a proton gradient across the mitochondrial membrane that is then used for ATP synthesis.</text>
</comment>
<comment type="cofactor">
    <cofactor evidence="2">
        <name>heme b</name>
        <dbReference type="ChEBI" id="CHEBI:60344"/>
    </cofactor>
    <text evidence="2">Binds 2 heme b groups non-covalently.</text>
</comment>
<comment type="subunit">
    <text evidence="2">The cytochrome bc1 complex contains 11 subunits: 3 respiratory subunits (MT-CYB, CYC1 and UQCRFS1), 2 core proteins (UQCRC1 and UQCRC2) and 6 low-molecular weight proteins (UQCRH/QCR6, UQCRB/QCR7, UQCRQ/QCR8, UQCR10/QCR9, UQCR11/QCR10 and a cleavage product of UQCRFS1). This cytochrome bc1 complex then forms a dimer.</text>
</comment>
<comment type="subcellular location">
    <subcellularLocation>
        <location evidence="2">Mitochondrion inner membrane</location>
        <topology evidence="2">Multi-pass membrane protein</topology>
    </subcellularLocation>
</comment>
<comment type="miscellaneous">
    <text evidence="1">Heme 1 (or BL or b562) is low-potential and absorbs at about 562 nm, and heme 2 (or BH or b566) is high-potential and absorbs at about 566 nm.</text>
</comment>
<comment type="similarity">
    <text evidence="3 4">Belongs to the cytochrome b family.</text>
</comment>
<comment type="caution">
    <text evidence="2">The full-length protein contains only eight transmembrane helices, not nine as predicted by bioinformatics tools.</text>
</comment>
<protein>
    <recommendedName>
        <fullName>Cytochrome b</fullName>
    </recommendedName>
    <alternativeName>
        <fullName>Complex III subunit 3</fullName>
    </alternativeName>
    <alternativeName>
        <fullName>Complex III subunit III</fullName>
    </alternativeName>
    <alternativeName>
        <fullName>Cytochrome b-c1 complex subunit 3</fullName>
    </alternativeName>
    <alternativeName>
        <fullName>Ubiquinol-cytochrome-c reductase complex cytochrome b subunit</fullName>
    </alternativeName>
</protein>
<organism>
    <name type="scientific">Cephalophorus niger</name>
    <name type="common">Black duiker</name>
    <name type="synonym">Cephalophus niger</name>
    <dbReference type="NCBI Taxonomy" id="129226"/>
    <lineage>
        <taxon>Eukaryota</taxon>
        <taxon>Metazoa</taxon>
        <taxon>Chordata</taxon>
        <taxon>Craniata</taxon>
        <taxon>Vertebrata</taxon>
        <taxon>Euteleostomi</taxon>
        <taxon>Mammalia</taxon>
        <taxon>Eutheria</taxon>
        <taxon>Laurasiatheria</taxon>
        <taxon>Artiodactyla</taxon>
        <taxon>Ruminantia</taxon>
        <taxon>Pecora</taxon>
        <taxon>Bovidae</taxon>
        <taxon>Cephalophinae</taxon>
        <taxon>Cephalophorus</taxon>
    </lineage>
</organism>
<evidence type="ECO:0000250" key="1"/>
<evidence type="ECO:0000250" key="2">
    <source>
        <dbReference type="UniProtKB" id="P00157"/>
    </source>
</evidence>
<evidence type="ECO:0000255" key="3">
    <source>
        <dbReference type="PROSITE-ProRule" id="PRU00967"/>
    </source>
</evidence>
<evidence type="ECO:0000255" key="4">
    <source>
        <dbReference type="PROSITE-ProRule" id="PRU00968"/>
    </source>
</evidence>
<sequence>MTNIRKTHPLLKIVNNAFIDLPAPSNISSWWNFGSLLGICLILQILTGLFLAMHYTADTTTAFSSVTHICRDVNYGWIIRYMHANGASMFFICLFMHVGRGLYYGSYTYMETWNIGVILLFATMATAFMGYVLPWGQMSFWGATVITNLLSAIPYIGTNLVEWIWGGFSVDKATLTRFFAFHFIFPFIIAALAMVHLLFLHETGSNNPTGISSDADKIPFHPYYTIKDILGALLLILVLMTLVLFSPDLLGDPDNYTPANPLNTPPHIKPEWYFLFAYAILRSIPNKLGGVLALVLSILVLILMPLLHTSKQRSMMFRPISQCLFWILVADLLTLTWIGGQPVEHPYIIIGQLASIMYFLLILVLMPMASTIENNLLKW</sequence>
<gene>
    <name type="primary">MT-CYB</name>
    <name type="synonym">COB</name>
    <name type="synonym">CYTB</name>
    <name type="synonym">MTCYB</name>
</gene>
<accession>Q9B5R1</accession>